<organism>
    <name type="scientific">Enterococcus faecalis (strain ATCC 700802 / V583)</name>
    <dbReference type="NCBI Taxonomy" id="226185"/>
    <lineage>
        <taxon>Bacteria</taxon>
        <taxon>Bacillati</taxon>
        <taxon>Bacillota</taxon>
        <taxon>Bacilli</taxon>
        <taxon>Lactobacillales</taxon>
        <taxon>Enterococcaceae</taxon>
        <taxon>Enterococcus</taxon>
    </lineage>
</organism>
<keyword id="KW-0963">Cytoplasm</keyword>
<keyword id="KW-0489">Methyltransferase</keyword>
<keyword id="KW-1185">Reference proteome</keyword>
<keyword id="KW-0698">rRNA processing</keyword>
<keyword id="KW-0949">S-adenosyl-L-methionine</keyword>
<keyword id="KW-0808">Transferase</keyword>
<evidence type="ECO:0000255" key="1">
    <source>
        <dbReference type="HAMAP-Rule" id="MF_01007"/>
    </source>
</evidence>
<evidence type="ECO:0000256" key="2">
    <source>
        <dbReference type="SAM" id="MobiDB-lite"/>
    </source>
</evidence>
<evidence type="ECO:0000305" key="3"/>
<dbReference type="EC" id="2.1.1.199" evidence="1"/>
<dbReference type="EMBL" id="U94707">
    <property type="protein sequence ID" value="AAC45631.1"/>
    <property type="status" value="ALT_INIT"/>
    <property type="molecule type" value="Genomic_DNA"/>
</dbReference>
<dbReference type="EMBL" id="AE016830">
    <property type="protein sequence ID" value="AAO80795.1"/>
    <property type="status" value="ALT_INIT"/>
    <property type="molecule type" value="Genomic_DNA"/>
</dbReference>
<dbReference type="RefSeq" id="NP_814725.1">
    <property type="nucleotide sequence ID" value="NC_004668.1"/>
</dbReference>
<dbReference type="RefSeq" id="WP_002355891.1">
    <property type="nucleotide sequence ID" value="NZ_KE136527.1"/>
</dbReference>
<dbReference type="SMR" id="O07104"/>
<dbReference type="STRING" id="226185.EF_0989"/>
<dbReference type="EnsemblBacteria" id="AAO80795">
    <property type="protein sequence ID" value="AAO80795"/>
    <property type="gene ID" value="EF_0989"/>
</dbReference>
<dbReference type="GeneID" id="60893376"/>
<dbReference type="KEGG" id="efa:EF0989"/>
<dbReference type="PATRIC" id="fig|226185.45.peg.3195"/>
<dbReference type="eggNOG" id="COG0275">
    <property type="taxonomic scope" value="Bacteria"/>
</dbReference>
<dbReference type="HOGENOM" id="CLU_038422_2_0_9"/>
<dbReference type="Proteomes" id="UP000001415">
    <property type="component" value="Chromosome"/>
</dbReference>
<dbReference type="GO" id="GO:0005737">
    <property type="term" value="C:cytoplasm"/>
    <property type="evidence" value="ECO:0007669"/>
    <property type="project" value="UniProtKB-SubCell"/>
</dbReference>
<dbReference type="GO" id="GO:0071424">
    <property type="term" value="F:rRNA (cytosine-N4-)-methyltransferase activity"/>
    <property type="evidence" value="ECO:0007669"/>
    <property type="project" value="UniProtKB-UniRule"/>
</dbReference>
<dbReference type="GO" id="GO:0070475">
    <property type="term" value="P:rRNA base methylation"/>
    <property type="evidence" value="ECO:0007669"/>
    <property type="project" value="UniProtKB-UniRule"/>
</dbReference>
<dbReference type="FunFam" id="1.10.150.170:FF:000001">
    <property type="entry name" value="Ribosomal RNA small subunit methyltransferase H"/>
    <property type="match status" value="1"/>
</dbReference>
<dbReference type="Gene3D" id="1.10.150.170">
    <property type="entry name" value="Putative methyltransferase TM0872, insert domain"/>
    <property type="match status" value="1"/>
</dbReference>
<dbReference type="Gene3D" id="3.40.50.150">
    <property type="entry name" value="Vaccinia Virus protein VP39"/>
    <property type="match status" value="1"/>
</dbReference>
<dbReference type="HAMAP" id="MF_01007">
    <property type="entry name" value="16SrRNA_methyltr_H"/>
    <property type="match status" value="1"/>
</dbReference>
<dbReference type="InterPro" id="IPR002903">
    <property type="entry name" value="RsmH"/>
</dbReference>
<dbReference type="InterPro" id="IPR023397">
    <property type="entry name" value="SAM-dep_MeTrfase_MraW_recog"/>
</dbReference>
<dbReference type="InterPro" id="IPR029063">
    <property type="entry name" value="SAM-dependent_MTases_sf"/>
</dbReference>
<dbReference type="NCBIfam" id="TIGR00006">
    <property type="entry name" value="16S rRNA (cytosine(1402)-N(4))-methyltransferase RsmH"/>
    <property type="match status" value="1"/>
</dbReference>
<dbReference type="PANTHER" id="PTHR11265:SF0">
    <property type="entry name" value="12S RRNA N4-METHYLCYTIDINE METHYLTRANSFERASE"/>
    <property type="match status" value="1"/>
</dbReference>
<dbReference type="PANTHER" id="PTHR11265">
    <property type="entry name" value="S-ADENOSYL-METHYLTRANSFERASE MRAW"/>
    <property type="match status" value="1"/>
</dbReference>
<dbReference type="Pfam" id="PF01795">
    <property type="entry name" value="Methyltransf_5"/>
    <property type="match status" value="1"/>
</dbReference>
<dbReference type="PIRSF" id="PIRSF004486">
    <property type="entry name" value="MraW"/>
    <property type="match status" value="1"/>
</dbReference>
<dbReference type="SUPFAM" id="SSF81799">
    <property type="entry name" value="Putative methyltransferase TM0872, insert domain"/>
    <property type="match status" value="1"/>
</dbReference>
<dbReference type="SUPFAM" id="SSF53335">
    <property type="entry name" value="S-adenosyl-L-methionine-dependent methyltransferases"/>
    <property type="match status" value="1"/>
</dbReference>
<gene>
    <name evidence="1" type="primary">rsmH</name>
    <name type="synonym">mraW</name>
    <name type="ordered locus">EF_0989</name>
</gene>
<feature type="chain" id="PRO_0000108625" description="Ribosomal RNA small subunit methyltransferase H">
    <location>
        <begin position="1"/>
        <end position="318"/>
    </location>
</feature>
<feature type="region of interest" description="Disordered" evidence="2">
    <location>
        <begin position="294"/>
        <end position="318"/>
    </location>
</feature>
<feature type="binding site" evidence="1">
    <location>
        <begin position="35"/>
        <end position="37"/>
    </location>
    <ligand>
        <name>S-adenosyl-L-methionine</name>
        <dbReference type="ChEBI" id="CHEBI:59789"/>
    </ligand>
</feature>
<feature type="binding site" evidence="1">
    <location>
        <position position="55"/>
    </location>
    <ligand>
        <name>S-adenosyl-L-methionine</name>
        <dbReference type="ChEBI" id="CHEBI:59789"/>
    </ligand>
</feature>
<feature type="binding site" evidence="1">
    <location>
        <position position="84"/>
    </location>
    <ligand>
        <name>S-adenosyl-L-methionine</name>
        <dbReference type="ChEBI" id="CHEBI:59789"/>
    </ligand>
</feature>
<feature type="binding site" evidence="1">
    <location>
        <position position="105"/>
    </location>
    <ligand>
        <name>S-adenosyl-L-methionine</name>
        <dbReference type="ChEBI" id="CHEBI:59789"/>
    </ligand>
</feature>
<feature type="binding site" evidence="1">
    <location>
        <position position="112"/>
    </location>
    <ligand>
        <name>S-adenosyl-L-methionine</name>
        <dbReference type="ChEBI" id="CHEBI:59789"/>
    </ligand>
</feature>
<feature type="sequence conflict" description="In Ref. 1; AAC45631." evidence="3" ref="1">
    <original>T</original>
    <variation>I</variation>
    <location>
        <position position="2"/>
    </location>
</feature>
<feature type="sequence conflict" description="In Ref. 1; AAC45631." evidence="3" ref="1">
    <original>L</original>
    <variation>F</variation>
    <location>
        <position position="32"/>
    </location>
</feature>
<sequence length="318" mass="36162">MTEEFRHYTVLLKETVDGLQVKPDGVYVDCTLGGAGHSEYLLTQLNEHGHLYAFDQDQKALAHAKTRLQKYVDKGQVTFIKSNFRNIKEELAEHGVFHVDGILYDLGVSSPQLDEAERGFSYHQDAPLDMRMDQDAPLTAREVVNTYSYSELVKIFFRYGEEKFSKQIAREIERVREKQPIETTGELVEIIKTAIPAPARRKGGHPAKRIFQAIRIAVNDELGAVEESLEQAIDLLAKNGRISVITFHSLEDRIVKTMFKEYSTVQDLPPGIPVVPEEFQPELKVITRKPILPSDSELSENNRSRSAKLRIAEKIKSR</sequence>
<comment type="function">
    <text evidence="1">Specifically methylates the N4 position of cytidine in position 1402 (C1402) of 16S rRNA.</text>
</comment>
<comment type="catalytic activity">
    <reaction evidence="1">
        <text>cytidine(1402) in 16S rRNA + S-adenosyl-L-methionine = N(4)-methylcytidine(1402) in 16S rRNA + S-adenosyl-L-homocysteine + H(+)</text>
        <dbReference type="Rhea" id="RHEA:42928"/>
        <dbReference type="Rhea" id="RHEA-COMP:10286"/>
        <dbReference type="Rhea" id="RHEA-COMP:10287"/>
        <dbReference type="ChEBI" id="CHEBI:15378"/>
        <dbReference type="ChEBI" id="CHEBI:57856"/>
        <dbReference type="ChEBI" id="CHEBI:59789"/>
        <dbReference type="ChEBI" id="CHEBI:74506"/>
        <dbReference type="ChEBI" id="CHEBI:82748"/>
        <dbReference type="EC" id="2.1.1.199"/>
    </reaction>
</comment>
<comment type="subcellular location">
    <subcellularLocation>
        <location evidence="1">Cytoplasm</location>
    </subcellularLocation>
</comment>
<comment type="similarity">
    <text evidence="1">Belongs to the methyltransferase superfamily. RsmH family.</text>
</comment>
<comment type="sequence caution" evidence="3">
    <conflict type="erroneous initiation">
        <sequence resource="EMBL-CDS" id="AAC45631"/>
    </conflict>
</comment>
<comment type="sequence caution" evidence="3">
    <conflict type="erroneous initiation">
        <sequence resource="EMBL-CDS" id="AAO80795"/>
    </conflict>
</comment>
<accession>O07104</accession>
<name>RSMH_ENTFA</name>
<protein>
    <recommendedName>
        <fullName evidence="1">Ribosomal RNA small subunit methyltransferase H</fullName>
        <ecNumber evidence="1">2.1.1.199</ecNumber>
    </recommendedName>
    <alternativeName>
        <fullName evidence="1">16S rRNA m(4)C1402 methyltransferase</fullName>
    </alternativeName>
    <alternativeName>
        <fullName evidence="1">rRNA (cytosine-N(4)-)-methyltransferase RsmH</fullName>
    </alternativeName>
</protein>
<proteinExistence type="inferred from homology"/>
<reference key="1">
    <citation type="journal article" date="1997" name="J. Bacteriol.">
        <title>Identification and characterization of cell wall-cell division gene clusters in pathogenic Gram-positive cocci.</title>
        <authorList>
            <person name="Pucci M.J."/>
            <person name="Thanassi J.A."/>
            <person name="Discotto L.F."/>
            <person name="Kessler R.E."/>
            <person name="Dougherty T.J."/>
        </authorList>
    </citation>
    <scope>NUCLEOTIDE SEQUENCE [GENOMIC DNA]</scope>
    <source>
        <strain>A24836</strain>
    </source>
</reference>
<reference key="2">
    <citation type="journal article" date="2003" name="Science">
        <title>Role of mobile DNA in the evolution of vancomycin-resistant Enterococcus faecalis.</title>
        <authorList>
            <person name="Paulsen I.T."/>
            <person name="Banerjei L."/>
            <person name="Myers G.S.A."/>
            <person name="Nelson K.E."/>
            <person name="Seshadri R."/>
            <person name="Read T.D."/>
            <person name="Fouts D.E."/>
            <person name="Eisen J.A."/>
            <person name="Gill S.R."/>
            <person name="Heidelberg J.F."/>
            <person name="Tettelin H."/>
            <person name="Dodson R.J."/>
            <person name="Umayam L.A."/>
            <person name="Brinkac L.M."/>
            <person name="Beanan M.J."/>
            <person name="Daugherty S.C."/>
            <person name="DeBoy R.T."/>
            <person name="Durkin S.A."/>
            <person name="Kolonay J.F."/>
            <person name="Madupu R."/>
            <person name="Nelson W.C."/>
            <person name="Vamathevan J.J."/>
            <person name="Tran B."/>
            <person name="Upton J."/>
            <person name="Hansen T."/>
            <person name="Shetty J."/>
            <person name="Khouri H.M."/>
            <person name="Utterback T.R."/>
            <person name="Radune D."/>
            <person name="Ketchum K.A."/>
            <person name="Dougherty B.A."/>
            <person name="Fraser C.M."/>
        </authorList>
    </citation>
    <scope>NUCLEOTIDE SEQUENCE [LARGE SCALE GENOMIC DNA]</scope>
    <source>
        <strain>ATCC 700802 / V583</strain>
    </source>
</reference>